<feature type="transit peptide" description="Mitochondrion" evidence="2 3 4">
    <location>
        <begin position="1"/>
        <end position="44"/>
    </location>
</feature>
<feature type="chain" id="PRO_0000344984" description="Succinate dehydrogenase [ubiquinone] flavoprotein subunit, mitochondrial">
    <location>
        <begin position="45"/>
        <end position="665"/>
    </location>
</feature>
<feature type="active site" description="Proton acceptor" evidence="3">
    <location>
        <position position="341"/>
    </location>
</feature>
<feature type="binding site" evidence="2 3 4">
    <location>
        <position position="70"/>
    </location>
    <ligand>
        <name>FAD</name>
        <dbReference type="ChEBI" id="CHEBI:57692"/>
    </ligand>
</feature>
<feature type="binding site" evidence="2 3 4">
    <location>
        <position position="73"/>
    </location>
    <ligand>
        <name>FAD</name>
        <dbReference type="ChEBI" id="CHEBI:57692"/>
    </ligand>
</feature>
<feature type="binding site" evidence="2 3 4">
    <location>
        <position position="92"/>
    </location>
    <ligand>
        <name>FAD</name>
        <dbReference type="ChEBI" id="CHEBI:57692"/>
    </ligand>
</feature>
<feature type="binding site" evidence="2 3 4">
    <location>
        <position position="93"/>
    </location>
    <ligand>
        <name>FAD</name>
        <dbReference type="ChEBI" id="CHEBI:57692"/>
    </ligand>
</feature>
<feature type="binding site" evidence="2 3 4">
    <location>
        <position position="99"/>
    </location>
    <ligand>
        <name>FAD</name>
        <dbReference type="ChEBI" id="CHEBI:57692"/>
    </ligand>
</feature>
<feature type="binding site" evidence="2 3 4">
    <location>
        <position position="101"/>
    </location>
    <ligand>
        <name>FAD</name>
        <dbReference type="ChEBI" id="CHEBI:57692"/>
    </ligand>
</feature>
<feature type="binding site" evidence="2 3 4">
    <location>
        <position position="106"/>
    </location>
    <ligand>
        <name>FAD</name>
        <dbReference type="ChEBI" id="CHEBI:57692"/>
    </ligand>
</feature>
<feature type="binding site" evidence="2 3 4">
    <location>
        <position position="222"/>
    </location>
    <ligand>
        <name>FAD</name>
        <dbReference type="ChEBI" id="CHEBI:57692"/>
    </ligand>
</feature>
<feature type="binding site" evidence="2 3 4">
    <location>
        <position position="276"/>
    </location>
    <ligand>
        <name>FAD</name>
        <dbReference type="ChEBI" id="CHEBI:57692"/>
    </ligand>
</feature>
<feature type="binding site" evidence="3 4">
    <location>
        <position position="297"/>
    </location>
    <ligand>
        <name>oxaloacetate</name>
        <dbReference type="ChEBI" id="CHEBI:16452"/>
    </ligand>
</feature>
<feature type="binding site" evidence="3 4">
    <location>
        <position position="309"/>
    </location>
    <ligand>
        <name>oxaloacetate</name>
        <dbReference type="ChEBI" id="CHEBI:16452"/>
    </ligand>
</feature>
<feature type="binding site" evidence="3 4">
    <location>
        <position position="408"/>
    </location>
    <ligand>
        <name>oxaloacetate</name>
        <dbReference type="ChEBI" id="CHEBI:16452"/>
    </ligand>
</feature>
<feature type="binding site" evidence="2 3 4">
    <location>
        <position position="441"/>
    </location>
    <ligand>
        <name>FAD</name>
        <dbReference type="ChEBI" id="CHEBI:57692"/>
    </ligand>
</feature>
<feature type="binding site" evidence="3 4">
    <location>
        <position position="452"/>
    </location>
    <ligand>
        <name>oxaloacetate</name>
        <dbReference type="ChEBI" id="CHEBI:16452"/>
    </ligand>
</feature>
<feature type="binding site" evidence="3 4">
    <location>
        <position position="455"/>
    </location>
    <ligand>
        <name>oxaloacetate</name>
        <dbReference type="ChEBI" id="CHEBI:16452"/>
    </ligand>
</feature>
<feature type="binding site" evidence="2 3 4">
    <location>
        <position position="457"/>
    </location>
    <ligand>
        <name>FAD</name>
        <dbReference type="ChEBI" id="CHEBI:57692"/>
    </ligand>
</feature>
<feature type="binding site" evidence="2 3 4">
    <location>
        <position position="458"/>
    </location>
    <ligand>
        <name>FAD</name>
        <dbReference type="ChEBI" id="CHEBI:57692"/>
    </ligand>
</feature>
<feature type="modified residue" description="Tele-8alpha-FAD histidine" evidence="3 4">
    <location>
        <position position="100"/>
    </location>
</feature>
<feature type="strand" evidence="7">
    <location>
        <begin position="58"/>
        <end position="68"/>
    </location>
</feature>
<feature type="helix" evidence="7">
    <location>
        <begin position="72"/>
        <end position="83"/>
    </location>
</feature>
<feature type="strand" evidence="7">
    <location>
        <begin position="88"/>
        <end position="94"/>
    </location>
</feature>
<feature type="helix" evidence="7">
    <location>
        <begin position="96"/>
        <end position="98"/>
    </location>
</feature>
<feature type="helix" evidence="7">
    <location>
        <begin position="100"/>
        <end position="103"/>
    </location>
</feature>
<feature type="strand" evidence="7">
    <location>
        <begin position="114"/>
        <end position="116"/>
    </location>
</feature>
<feature type="helix" evidence="7">
    <location>
        <begin position="120"/>
        <end position="130"/>
    </location>
</feature>
<feature type="turn" evidence="7">
    <location>
        <begin position="131"/>
        <end position="133"/>
    </location>
</feature>
<feature type="helix" evidence="7">
    <location>
        <begin position="137"/>
        <end position="156"/>
    </location>
</feature>
<feature type="strand" evidence="7">
    <location>
        <begin position="167"/>
        <end position="169"/>
    </location>
</feature>
<feature type="strand" evidence="8">
    <location>
        <begin position="171"/>
        <end position="179"/>
    </location>
</feature>
<feature type="turn" evidence="7">
    <location>
        <begin position="180"/>
        <end position="183"/>
    </location>
</feature>
<feature type="strand" evidence="8">
    <location>
        <begin position="186"/>
        <end position="191"/>
    </location>
</feature>
<feature type="helix" evidence="7">
    <location>
        <begin position="197"/>
        <end position="209"/>
    </location>
</feature>
<feature type="strand" evidence="7">
    <location>
        <begin position="215"/>
        <end position="218"/>
    </location>
</feature>
<feature type="strand" evidence="7">
    <location>
        <begin position="220"/>
        <end position="228"/>
    </location>
</feature>
<feature type="strand" evidence="7">
    <location>
        <begin position="231"/>
        <end position="239"/>
    </location>
</feature>
<feature type="turn" evidence="7">
    <location>
        <begin position="240"/>
        <end position="242"/>
    </location>
</feature>
<feature type="strand" evidence="7">
    <location>
        <begin position="245"/>
        <end position="255"/>
    </location>
</feature>
<feature type="helix" evidence="7">
    <location>
        <begin position="261"/>
        <end position="263"/>
    </location>
</feature>
<feature type="strand" evidence="7">
    <location>
        <begin position="264"/>
        <end position="269"/>
    </location>
</feature>
<feature type="helix" evidence="7">
    <location>
        <begin position="276"/>
        <end position="283"/>
    </location>
</feature>
<feature type="strand" evidence="7">
    <location>
        <begin position="294"/>
        <end position="301"/>
    </location>
</feature>
<feature type="turn" evidence="7">
    <location>
        <begin position="302"/>
        <end position="304"/>
    </location>
</feature>
<feature type="helix" evidence="7">
    <location>
        <begin position="311"/>
        <end position="314"/>
    </location>
</feature>
<feature type="strand" evidence="7">
    <location>
        <begin position="318"/>
        <end position="320"/>
    </location>
</feature>
<feature type="helix" evidence="7">
    <location>
        <begin position="328"/>
        <end position="331"/>
    </location>
</feature>
<feature type="turn" evidence="7">
    <location>
        <begin position="333"/>
        <end position="335"/>
    </location>
</feature>
<feature type="helix" evidence="7">
    <location>
        <begin position="336"/>
        <end position="338"/>
    </location>
</feature>
<feature type="helix" evidence="7">
    <location>
        <begin position="341"/>
        <end position="353"/>
    </location>
</feature>
<feature type="turn" evidence="9">
    <location>
        <begin position="354"/>
        <end position="356"/>
    </location>
</feature>
<feature type="turn" evidence="7">
    <location>
        <begin position="359"/>
        <end position="362"/>
    </location>
</feature>
<feature type="strand" evidence="7">
    <location>
        <begin position="364"/>
        <end position="368"/>
    </location>
</feature>
<feature type="helix" evidence="7">
    <location>
        <begin position="374"/>
        <end position="380"/>
    </location>
</feature>
<feature type="helix" evidence="7">
    <location>
        <begin position="382"/>
        <end position="392"/>
    </location>
</feature>
<feature type="turn" evidence="7">
    <location>
        <begin position="396"/>
        <end position="398"/>
    </location>
</feature>
<feature type="strand" evidence="7">
    <location>
        <begin position="401"/>
        <end position="411"/>
    </location>
</feature>
<feature type="strand" evidence="7">
    <location>
        <begin position="413"/>
        <end position="416"/>
    </location>
</feature>
<feature type="strand" evidence="7">
    <location>
        <begin position="420"/>
        <end position="426"/>
    </location>
</feature>
<feature type="strand" evidence="7">
    <location>
        <begin position="429"/>
        <end position="438"/>
    </location>
</feature>
<feature type="helix" evidence="7">
    <location>
        <begin position="440"/>
        <end position="442"/>
    </location>
</feature>
<feature type="strand" evidence="7">
    <location>
        <begin position="446"/>
        <end position="448"/>
    </location>
</feature>
<feature type="helix" evidence="7">
    <location>
        <begin position="457"/>
        <end position="475"/>
    </location>
</feature>
<feature type="turn" evidence="7">
    <location>
        <begin position="487"/>
        <end position="490"/>
    </location>
</feature>
<feature type="helix" evidence="7">
    <location>
        <begin position="491"/>
        <end position="501"/>
    </location>
</feature>
<feature type="strand" evidence="7">
    <location>
        <begin position="504"/>
        <end position="508"/>
    </location>
</feature>
<feature type="helix" evidence="7">
    <location>
        <begin position="509"/>
        <end position="523"/>
    </location>
</feature>
<feature type="strand" evidence="7">
    <location>
        <begin position="524"/>
        <end position="528"/>
    </location>
</feature>
<feature type="helix" evidence="7">
    <location>
        <begin position="530"/>
        <end position="545"/>
    </location>
</feature>
<feature type="helix" evidence="7">
    <location>
        <begin position="546"/>
        <end position="549"/>
    </location>
</feature>
<feature type="helix" evidence="7">
    <location>
        <begin position="561"/>
        <end position="585"/>
    </location>
</feature>
<feature type="strand" evidence="9">
    <location>
        <begin position="593"/>
        <end position="595"/>
    </location>
</feature>
<feature type="helix" evidence="7">
    <location>
        <begin position="619"/>
        <end position="621"/>
    </location>
</feature>
<feature type="strand" evidence="7">
    <location>
        <begin position="625"/>
        <end position="632"/>
    </location>
</feature>
<feature type="turn" evidence="7">
    <location>
        <begin position="633"/>
        <end position="636"/>
    </location>
</feature>
<feature type="strand" evidence="7">
    <location>
        <begin position="637"/>
        <end position="644"/>
    </location>
</feature>
<feature type="turn" evidence="7">
    <location>
        <begin position="652"/>
        <end position="654"/>
    </location>
</feature>
<keyword id="KW-0002">3D-structure</keyword>
<keyword id="KW-0249">Electron transport</keyword>
<keyword id="KW-0274">FAD</keyword>
<keyword id="KW-0285">Flavoprotein</keyword>
<keyword id="KW-0472">Membrane</keyword>
<keyword id="KW-0496">Mitochondrion</keyword>
<keyword id="KW-0999">Mitochondrion inner membrane</keyword>
<keyword id="KW-0560">Oxidoreductase</keyword>
<keyword id="KW-1185">Reference proteome</keyword>
<keyword id="KW-0809">Transit peptide</keyword>
<keyword id="KW-0813">Transport</keyword>
<keyword id="KW-0816">Tricarboxylic acid cycle</keyword>
<proteinExistence type="evidence at protein level"/>
<comment type="function">
    <text evidence="1 6">Flavoprotein (FP) subunit of succinate dehydrogenase (SDH) that is involved in complex II of the mitochondrial electron transport chain and is responsible for transferring electrons from succinate to ubiquinone (coenzyme Q) (Probable) (PubMed:16371358). SDH also oxidizes malate to the non-canonical enol form of oxaloacetate, enol-oxaloacetate (By similarity). Enol-oxaloacetate, which is a potent inhibitor of the succinate dehydrogenase activity, is further isomerized into keto-oxaloacetate (By similarity).</text>
</comment>
<comment type="catalytic activity">
    <reaction evidence="6">
        <text>a ubiquinone + succinate = a ubiquinol + fumarate</text>
        <dbReference type="Rhea" id="RHEA:13713"/>
        <dbReference type="Rhea" id="RHEA-COMP:9565"/>
        <dbReference type="Rhea" id="RHEA-COMP:9566"/>
        <dbReference type="ChEBI" id="CHEBI:16389"/>
        <dbReference type="ChEBI" id="CHEBI:17976"/>
        <dbReference type="ChEBI" id="CHEBI:29806"/>
        <dbReference type="ChEBI" id="CHEBI:30031"/>
        <dbReference type="EC" id="1.3.5.1"/>
    </reaction>
</comment>
<comment type="catalytic activity">
    <reaction evidence="1">
        <text>(R)-malate + a quinone = enol-oxaloacetate + a quinol</text>
        <dbReference type="Rhea" id="RHEA:79827"/>
        <dbReference type="ChEBI" id="CHEBI:15588"/>
        <dbReference type="ChEBI" id="CHEBI:17479"/>
        <dbReference type="ChEBI" id="CHEBI:24646"/>
        <dbReference type="ChEBI" id="CHEBI:132124"/>
    </reaction>
    <physiologicalReaction direction="left-to-right" evidence="1">
        <dbReference type="Rhea" id="RHEA:79828"/>
    </physiologicalReaction>
</comment>
<comment type="catalytic activity">
    <reaction evidence="1">
        <text>(S)-malate + a quinone = enol-oxaloacetate + a quinol</text>
        <dbReference type="Rhea" id="RHEA:79831"/>
        <dbReference type="ChEBI" id="CHEBI:15589"/>
        <dbReference type="ChEBI" id="CHEBI:17479"/>
        <dbReference type="ChEBI" id="CHEBI:24646"/>
        <dbReference type="ChEBI" id="CHEBI:132124"/>
    </reaction>
    <physiologicalReaction direction="left-to-right" evidence="1">
        <dbReference type="Rhea" id="RHEA:79832"/>
    </physiologicalReaction>
</comment>
<comment type="cofactor">
    <cofactor evidence="2 3 4">
        <name>FAD</name>
        <dbReference type="ChEBI" id="CHEBI:57692"/>
    </cofactor>
</comment>
<comment type="activity regulation">
    <text evidence="1">Enol-oxaloacetate inhibits the succinate dehydrogenase activity.</text>
</comment>
<comment type="pathway">
    <text evidence="6">Carbohydrate metabolism; tricarboxylic acid cycle; fumarate from succinate (eukaryal route): step 1/1.</text>
</comment>
<comment type="subunit">
    <text evidence="2 3 4">Component of complex II composed of four subunits: the flavoprotein (FP) SDHA, iron-sulfur protein (IP) SDHB, and a cytochrome b560 composed of SDHC and SDHD.</text>
</comment>
<comment type="subcellular location">
    <subcellularLocation>
        <location evidence="2 3 4">Mitochondrion inner membrane</location>
        <topology evidence="2 3 4">Peripheral membrane protein</topology>
        <orientation evidence="2 3 4">Matrix side</orientation>
    </subcellularLocation>
</comment>
<comment type="similarity">
    <text evidence="5">Belongs to the FAD-dependent oxidoreductase 2 family. FRD/SDH subfamily.</text>
</comment>
<dbReference type="EC" id="1.3.5.1" evidence="6"/>
<dbReference type="EC" id="1.1.5.-" evidence="1"/>
<dbReference type="EMBL" id="CO635738">
    <property type="status" value="NOT_ANNOTATED_CDS"/>
    <property type="molecule type" value="mRNA"/>
</dbReference>
<dbReference type="EMBL" id="AF095939">
    <property type="protein sequence ID" value="AAC72374.1"/>
    <property type="molecule type" value="mRNA"/>
</dbReference>
<dbReference type="RefSeq" id="NP_001264327.1">
    <property type="nucleotide sequence ID" value="NM_001277398.1"/>
</dbReference>
<dbReference type="PDB" id="1YQ3">
    <property type="method" value="X-ray"/>
    <property type="resolution" value="2.20 A"/>
    <property type="chains" value="A=45-665"/>
</dbReference>
<dbReference type="PDB" id="1YQ4">
    <property type="method" value="X-ray"/>
    <property type="resolution" value="2.33 A"/>
    <property type="chains" value="A=45-665"/>
</dbReference>
<dbReference type="PDB" id="2FBW">
    <property type="method" value="X-ray"/>
    <property type="resolution" value="2.10 A"/>
    <property type="chains" value="A/N=45-665"/>
</dbReference>
<dbReference type="PDB" id="2H88">
    <property type="method" value="X-ray"/>
    <property type="resolution" value="1.74 A"/>
    <property type="chains" value="A/N=45-665"/>
</dbReference>
<dbReference type="PDB" id="2H89">
    <property type="method" value="X-ray"/>
    <property type="resolution" value="2.40 A"/>
    <property type="chains" value="A=45-665"/>
</dbReference>
<dbReference type="PDB" id="2WQY">
    <property type="method" value="X-ray"/>
    <property type="resolution" value="2.10 A"/>
    <property type="chains" value="A/N=45-665"/>
</dbReference>
<dbReference type="PDB" id="6MYO">
    <property type="method" value="X-ray"/>
    <property type="resolution" value="2.20 A"/>
    <property type="chains" value="A=45-665"/>
</dbReference>
<dbReference type="PDB" id="6MYP">
    <property type="method" value="X-ray"/>
    <property type="resolution" value="2.10 A"/>
    <property type="chains" value="A=45-665"/>
</dbReference>
<dbReference type="PDB" id="6MYQ">
    <property type="method" value="X-ray"/>
    <property type="resolution" value="1.97 A"/>
    <property type="chains" value="A=45-665"/>
</dbReference>
<dbReference type="PDB" id="6MYR">
    <property type="method" value="X-ray"/>
    <property type="resolution" value="2.15 A"/>
    <property type="chains" value="A=45-665"/>
</dbReference>
<dbReference type="PDB" id="6MYS">
    <property type="method" value="X-ray"/>
    <property type="resolution" value="2.37 A"/>
    <property type="chains" value="A=45-665"/>
</dbReference>
<dbReference type="PDB" id="6MYT">
    <property type="method" value="X-ray"/>
    <property type="resolution" value="2.27 A"/>
    <property type="chains" value="A=45-665"/>
</dbReference>
<dbReference type="PDB" id="6MYU">
    <property type="method" value="X-ray"/>
    <property type="resolution" value="1.97 A"/>
    <property type="chains" value="A=45-665"/>
</dbReference>
<dbReference type="PDBsum" id="1YQ3"/>
<dbReference type="PDBsum" id="1YQ4"/>
<dbReference type="PDBsum" id="2FBW"/>
<dbReference type="PDBsum" id="2H88"/>
<dbReference type="PDBsum" id="2H89"/>
<dbReference type="PDBsum" id="2WQY"/>
<dbReference type="PDBsum" id="6MYO"/>
<dbReference type="PDBsum" id="6MYP"/>
<dbReference type="PDBsum" id="6MYQ"/>
<dbReference type="PDBsum" id="6MYR"/>
<dbReference type="PDBsum" id="6MYS"/>
<dbReference type="PDBsum" id="6MYT"/>
<dbReference type="PDBsum" id="6MYU"/>
<dbReference type="SMR" id="Q9YHT1"/>
<dbReference type="FunCoup" id="Q9YHT1">
    <property type="interactions" value="2006"/>
</dbReference>
<dbReference type="STRING" id="9031.ENSGALP00000021475"/>
<dbReference type="PaxDb" id="9031-ENSGALP00000021475"/>
<dbReference type="GeneID" id="395758"/>
<dbReference type="KEGG" id="gga:395758"/>
<dbReference type="CTD" id="6389"/>
<dbReference type="VEuPathDB" id="HostDB:geneid_395758"/>
<dbReference type="eggNOG" id="KOG2403">
    <property type="taxonomic scope" value="Eukaryota"/>
</dbReference>
<dbReference type="InParanoid" id="Q9YHT1"/>
<dbReference type="OrthoDB" id="71672at2759"/>
<dbReference type="PhylomeDB" id="Q9YHT1"/>
<dbReference type="Reactome" id="R-GGA-372987">
    <property type="pathway name" value="The tricarboxylic acid cycle"/>
</dbReference>
<dbReference type="UniPathway" id="UPA00223">
    <property type="reaction ID" value="UER01006"/>
</dbReference>
<dbReference type="EvolutionaryTrace" id="Q9YHT1"/>
<dbReference type="PRO" id="PR:Q9YHT1"/>
<dbReference type="Proteomes" id="UP000000539">
    <property type="component" value="Unassembled WGS sequence"/>
</dbReference>
<dbReference type="GO" id="GO:0005743">
    <property type="term" value="C:mitochondrial inner membrane"/>
    <property type="evidence" value="ECO:0000250"/>
    <property type="project" value="UniProtKB"/>
</dbReference>
<dbReference type="GO" id="GO:0045273">
    <property type="term" value="C:respiratory chain complex II (succinate dehydrogenase)"/>
    <property type="evidence" value="ECO:0000314"/>
    <property type="project" value="UniProtKB"/>
</dbReference>
<dbReference type="GO" id="GO:0009055">
    <property type="term" value="F:electron transfer activity"/>
    <property type="evidence" value="ECO:0000318"/>
    <property type="project" value="GO_Central"/>
</dbReference>
<dbReference type="GO" id="GO:0050660">
    <property type="term" value="F:flavin adenine dinucleotide binding"/>
    <property type="evidence" value="ECO:0000318"/>
    <property type="project" value="GO_Central"/>
</dbReference>
<dbReference type="GO" id="GO:0008177">
    <property type="term" value="F:succinate dehydrogenase (quinone) activity"/>
    <property type="evidence" value="ECO:0000250"/>
    <property type="project" value="UniProtKB"/>
</dbReference>
<dbReference type="GO" id="GO:0006121">
    <property type="term" value="P:mitochondrial electron transport, succinate to ubiquinone"/>
    <property type="evidence" value="ECO:0000318"/>
    <property type="project" value="GO_Central"/>
</dbReference>
<dbReference type="GO" id="GO:0022904">
    <property type="term" value="P:respiratory electron transport chain"/>
    <property type="evidence" value="ECO:0000250"/>
    <property type="project" value="UniProtKB"/>
</dbReference>
<dbReference type="GO" id="GO:0006105">
    <property type="term" value="P:succinate metabolic process"/>
    <property type="evidence" value="ECO:0000250"/>
    <property type="project" value="UniProtKB"/>
</dbReference>
<dbReference type="GO" id="GO:0006099">
    <property type="term" value="P:tricarboxylic acid cycle"/>
    <property type="evidence" value="ECO:0007669"/>
    <property type="project" value="UniProtKB-UniPathway"/>
</dbReference>
<dbReference type="FunFam" id="3.90.700.10:FF:000001">
    <property type="entry name" value="Mitochondrial succinate dehydrogenase flavoprotein subunit"/>
    <property type="match status" value="1"/>
</dbReference>
<dbReference type="FunFam" id="4.10.80.40:FF:000004">
    <property type="entry name" value="Succinate dehydrogenase [ubiquinone] flavoprotein subunit, mitochondrial"/>
    <property type="match status" value="1"/>
</dbReference>
<dbReference type="FunFam" id="3.50.50.60:FF:000482">
    <property type="entry name" value="Succinate dehydrogenase complex, subunit A, flavoprotein (Fp)"/>
    <property type="match status" value="1"/>
</dbReference>
<dbReference type="FunFam" id="3.50.50.60:FF:001062">
    <property type="entry name" value="Succinate dehydrogenase complex, subunit A, flavoprotein (Fp)"/>
    <property type="match status" value="1"/>
</dbReference>
<dbReference type="FunFam" id="1.20.58.100:FF:000001">
    <property type="entry name" value="Succinate dehydrogenase flavoprotein subunit (SdhA)"/>
    <property type="match status" value="1"/>
</dbReference>
<dbReference type="Gene3D" id="3.50.50.60">
    <property type="entry name" value="FAD/NAD(P)-binding domain"/>
    <property type="match status" value="1"/>
</dbReference>
<dbReference type="Gene3D" id="1.20.58.100">
    <property type="entry name" value="Fumarate reductase/succinate dehydrogenase flavoprotein-like, C-terminal domain"/>
    <property type="match status" value="1"/>
</dbReference>
<dbReference type="Gene3D" id="4.10.80.40">
    <property type="entry name" value="succinate dehydrogenase protein domain"/>
    <property type="match status" value="1"/>
</dbReference>
<dbReference type="Gene3D" id="3.90.700.10">
    <property type="entry name" value="Succinate dehydrogenase/fumarate reductase flavoprotein, catalytic domain"/>
    <property type="match status" value="1"/>
</dbReference>
<dbReference type="InterPro" id="IPR003953">
    <property type="entry name" value="FAD-dep_OxRdtase_2_FAD-bd"/>
</dbReference>
<dbReference type="InterPro" id="IPR036188">
    <property type="entry name" value="FAD/NAD-bd_sf"/>
</dbReference>
<dbReference type="InterPro" id="IPR003952">
    <property type="entry name" value="FRD_SDH_FAD_BS"/>
</dbReference>
<dbReference type="InterPro" id="IPR037099">
    <property type="entry name" value="Fum_R/Succ_DH_flav-like_C_sf"/>
</dbReference>
<dbReference type="InterPro" id="IPR015939">
    <property type="entry name" value="Fum_Rdtase/Succ_DH_flav-like_C"/>
</dbReference>
<dbReference type="InterPro" id="IPR030664">
    <property type="entry name" value="SdhA/FrdA/AprA"/>
</dbReference>
<dbReference type="InterPro" id="IPR027477">
    <property type="entry name" value="Succ_DH/fumarate_Rdtase_cat_sf"/>
</dbReference>
<dbReference type="InterPro" id="IPR011281">
    <property type="entry name" value="Succ_DH_flav_su_fwd"/>
</dbReference>
<dbReference type="InterPro" id="IPR014006">
    <property type="entry name" value="Succ_Dhase_FrdA_Gneg"/>
</dbReference>
<dbReference type="NCBIfam" id="TIGR01816">
    <property type="entry name" value="sdhA_forward"/>
    <property type="match status" value="1"/>
</dbReference>
<dbReference type="NCBIfam" id="TIGR01812">
    <property type="entry name" value="sdhA_frdA_Gneg"/>
    <property type="match status" value="1"/>
</dbReference>
<dbReference type="PANTHER" id="PTHR11632">
    <property type="entry name" value="SUCCINATE DEHYDROGENASE 2 FLAVOPROTEIN SUBUNIT"/>
    <property type="match status" value="1"/>
</dbReference>
<dbReference type="PANTHER" id="PTHR11632:SF51">
    <property type="entry name" value="SUCCINATE DEHYDROGENASE [UBIQUINONE] FLAVOPROTEIN SUBUNIT, MITOCHONDRIAL"/>
    <property type="match status" value="1"/>
</dbReference>
<dbReference type="Pfam" id="PF00890">
    <property type="entry name" value="FAD_binding_2"/>
    <property type="match status" value="1"/>
</dbReference>
<dbReference type="Pfam" id="PF02910">
    <property type="entry name" value="Succ_DH_flav_C"/>
    <property type="match status" value="1"/>
</dbReference>
<dbReference type="PIRSF" id="PIRSF000171">
    <property type="entry name" value="SDHA_APRA_LASPO"/>
    <property type="match status" value="1"/>
</dbReference>
<dbReference type="SUPFAM" id="SSF51905">
    <property type="entry name" value="FAD/NAD(P)-binding domain"/>
    <property type="match status" value="1"/>
</dbReference>
<dbReference type="SUPFAM" id="SSF46977">
    <property type="entry name" value="Succinate dehydrogenase/fumarate reductase flavoprotein C-terminal domain"/>
    <property type="match status" value="1"/>
</dbReference>
<dbReference type="SUPFAM" id="SSF56425">
    <property type="entry name" value="Succinate dehydrogenase/fumarate reductase flavoprotein, catalytic domain"/>
    <property type="match status" value="1"/>
</dbReference>
<dbReference type="PROSITE" id="PS00504">
    <property type="entry name" value="FRD_SDH_FAD_BINDING"/>
    <property type="match status" value="1"/>
</dbReference>
<accession>Q9YHT1</accession>
<sequence length="665" mass="72931">MAAVVAASRSLAKCWLRPAVRAWPAACQTHARNFHFTVDGKKNASTKVSDSISTQYPVVDHEFDAVVVGAGGAGLRAAFGLSEAGFNTACVTKLFPTRSHTVAAQGGINAALGNMEDDNWRWHFYDTVKGSDWLGDQDAIHYMTEQAPAAVIELENYGMPFSRTEEGKIYQRAFGGQSLQFGKGGQAHRCCCVADRTGHSLLHTLYGRSLRYDTSYFVEYFALDLLMENGECRGVIALCIEDGTIHRFRAKNTVIATGGYGRTYFSCTSAHTSTGDGTAMVTRAGLPCQDLEFVQFHPTGIYGAGCLITEGCRGEGGILINSQGERFMERYAPVAKDLASRDVVSRSMTIEIREGRGCGPEKDHVYLQLHHLPPQQLATRLPGISETAMIFAGVDVTKEPIPVLPTVHYNMGGIPTNYKGQVITHVNGEDKVVPGLYACGEAASASVHGANRLGANSLLDLVVFGRACALTIAETCKPGEPVPSIKPNAGEESVANLDKLRFADGTIRTSEARLNMQKTMQSHAAVFRTGSILQEGCEKLSQIYCDLAHLKTFDRGIVWNTDLVETLELQNLMLCALQTIYGAEARKESRGAHAREDYKFRIDDFDYSKPLQGQQKRPFEEHWRKHTLSYVDVKSGKVTLKYRPVIDRTLNEEDCSSVPPAIRSY</sequence>
<organism>
    <name type="scientific">Gallus gallus</name>
    <name type="common">Chicken</name>
    <dbReference type="NCBI Taxonomy" id="9031"/>
    <lineage>
        <taxon>Eukaryota</taxon>
        <taxon>Metazoa</taxon>
        <taxon>Chordata</taxon>
        <taxon>Craniata</taxon>
        <taxon>Vertebrata</taxon>
        <taxon>Euteleostomi</taxon>
        <taxon>Archelosauria</taxon>
        <taxon>Archosauria</taxon>
        <taxon>Dinosauria</taxon>
        <taxon>Saurischia</taxon>
        <taxon>Theropoda</taxon>
        <taxon>Coelurosauria</taxon>
        <taxon>Aves</taxon>
        <taxon>Neognathae</taxon>
        <taxon>Galloanserae</taxon>
        <taxon>Galliformes</taxon>
        <taxon>Phasianidae</taxon>
        <taxon>Phasianinae</taxon>
        <taxon>Gallus</taxon>
    </lineage>
</organism>
<gene>
    <name type="primary">SDHA</name>
</gene>
<reference key="1">
    <citation type="journal article" date="2004" name="Anim. Genet.">
        <title>Detection of sequence polymorphisms in red junglefowl and white leghorn ESTs.</title>
        <authorList>
            <person name="Fitzsimmons C.J."/>
            <person name="Savolainen P."/>
            <person name="Amini B."/>
            <person name="Hjaelm G."/>
            <person name="Lundeberg J."/>
            <person name="Andersson L."/>
        </authorList>
    </citation>
    <scope>NUCLEOTIDE SEQUENCE [MRNA] OF 1-324</scope>
</reference>
<reference key="2">
    <citation type="submission" date="1998-10" db="EMBL/GenBank/DDBJ databases">
        <title>OXPHOS genes in mammals and the molecular clock.</title>
        <authorList>
            <person name="Weinreich D.M."/>
        </authorList>
    </citation>
    <scope>NUCLEOTIDE SEQUENCE [MRNA] OF 167-665</scope>
    <source>
        <tissue>Heart</tissue>
    </source>
</reference>
<reference key="3">
    <citation type="journal article" date="2005" name="Acta Crystallogr. D">
        <title>Crystallization of mitochondrial respiratory complex II from chicken heart: a membrane-protein complex diffracting to 2.0 A.</title>
        <authorList>
            <person name="Huang L.-S."/>
            <person name="Borders T.M."/>
            <person name="Shen J.T."/>
            <person name="Wang C.-J."/>
            <person name="Berry E.A."/>
        </authorList>
    </citation>
    <scope>X-RAY CRYSTALLOGRAPHY (2.0 ANGSTROMS) OF 45-665 IN COMPLEX WITH FAD</scope>
    <scope>SUBUNIT</scope>
    <scope>SUBCELLULAR LOCATION</scope>
    <scope>COFACTOR</scope>
</reference>
<reference key="4">
    <citation type="journal article" date="2006" name="Biochim. Biophys. Acta">
        <title>Crystallographic studies of the binding of ligands to the dicarboxylate site of complex II, and the identity of the ligand in the 'oxaloacetate-inhibited' state.</title>
        <authorList>
            <person name="Huang L.-S."/>
            <person name="Shen J.T."/>
            <person name="Wang A.C."/>
            <person name="Berry E.A."/>
        </authorList>
    </citation>
    <scope>X-RAY CRYSTALLOGRAPHY (1.74 ANGSTROMS) OF 45-665 IN COMPLEXES WITH FAD AND MALONATE</scope>
    <scope>SUBUNIT</scope>
    <scope>SUBCELLULAR LOCATION</scope>
    <scope>COFACTOR</scope>
</reference>
<reference key="5">
    <citation type="journal article" date="2006" name="J. Biol. Chem.">
        <title>3-nitropropionic acid is a suicide inhibitor of mitochondrial respiration that, upon oxidation by complex II, forms a covalent adduct with a catalytic base arginine in the active site of the enzyme.</title>
        <authorList>
            <person name="Huang L.-S."/>
            <person name="Sun G."/>
            <person name="Cobessi D."/>
            <person name="Wang A.C."/>
            <person name="Shen J.T."/>
            <person name="Tung E.Y."/>
            <person name="Anderson V.E."/>
            <person name="Berry E.A."/>
        </authorList>
    </citation>
    <scope>X-RAY CRYSTALLOGRAPHY (2.2 ANGSTROMS) OF 45-665 IN COMPLEXES WITH FAD; OXALOACETATE AND 3-NITROPROPIONIC ACID</scope>
    <scope>COFACTOR</scope>
    <scope>FUNCTION</scope>
    <scope>CATALYTIC ACTIVITY</scope>
    <scope>PATHWAY</scope>
    <scope>ACTIVE SITE</scope>
    <scope>SUBUNIT</scope>
    <scope>SUBCELLULAR LOCATION</scope>
    <scope>IDENTIFICATION BY MASS SPECTROMETRY</scope>
</reference>
<protein>
    <recommendedName>
        <fullName>Succinate dehydrogenase [ubiquinone] flavoprotein subunit, mitochondrial</fullName>
        <ecNumber evidence="6">1.3.5.1</ecNumber>
    </recommendedName>
    <alternativeName>
        <fullName>Flavoprotein subunit of complex II</fullName>
        <shortName>Fp</shortName>
    </alternativeName>
    <alternativeName>
        <fullName>Malate dehydrogenase [quinone] flavoprotein subunit</fullName>
        <ecNumber evidence="1">1.1.5.-</ecNumber>
    </alternativeName>
</protein>
<name>SDHA_CHICK</name>
<evidence type="ECO:0000250" key="1">
    <source>
        <dbReference type="UniProtKB" id="P31039"/>
    </source>
</evidence>
<evidence type="ECO:0000269" key="2">
    <source>
    </source>
</evidence>
<evidence type="ECO:0000269" key="3">
    <source>
    </source>
</evidence>
<evidence type="ECO:0000269" key="4">
    <source>
    </source>
</evidence>
<evidence type="ECO:0000305" key="5"/>
<evidence type="ECO:0000305" key="6">
    <source>
    </source>
</evidence>
<evidence type="ECO:0007829" key="7">
    <source>
        <dbReference type="PDB" id="2H88"/>
    </source>
</evidence>
<evidence type="ECO:0007829" key="8">
    <source>
        <dbReference type="PDB" id="2WQY"/>
    </source>
</evidence>
<evidence type="ECO:0007829" key="9">
    <source>
        <dbReference type="PDB" id="6MYQ"/>
    </source>
</evidence>